<reference key="1">
    <citation type="journal article" date="2000" name="DNA Res.">
        <title>Structural analysis of Arabidopsis thaliana chromosome 3. I. Sequence features of the regions of 4,504,864 bp covered by sixty P1 and TAC clones.</title>
        <authorList>
            <person name="Sato S."/>
            <person name="Nakamura Y."/>
            <person name="Kaneko T."/>
            <person name="Katoh T."/>
            <person name="Asamizu E."/>
            <person name="Tabata S."/>
        </authorList>
    </citation>
    <scope>NUCLEOTIDE SEQUENCE [LARGE SCALE GENOMIC DNA]</scope>
    <source>
        <strain>cv. Columbia</strain>
    </source>
</reference>
<reference key="2">
    <citation type="journal article" date="2017" name="Plant J.">
        <title>Araport11: a complete reannotation of the Arabidopsis thaliana reference genome.</title>
        <authorList>
            <person name="Cheng C.Y."/>
            <person name="Krishnakumar V."/>
            <person name="Chan A.P."/>
            <person name="Thibaud-Nissen F."/>
            <person name="Schobel S."/>
            <person name="Town C.D."/>
        </authorList>
    </citation>
    <scope>GENOME REANNOTATION</scope>
    <source>
        <strain>cv. Columbia</strain>
    </source>
</reference>
<reference key="3">
    <citation type="journal article" date="2003" name="Science">
        <title>Empirical analysis of transcriptional activity in the Arabidopsis genome.</title>
        <authorList>
            <person name="Yamada K."/>
            <person name="Lim J."/>
            <person name="Dale J.M."/>
            <person name="Chen H."/>
            <person name="Shinn P."/>
            <person name="Palm C.J."/>
            <person name="Southwick A.M."/>
            <person name="Wu H.C."/>
            <person name="Kim C.J."/>
            <person name="Nguyen M."/>
            <person name="Pham P.K."/>
            <person name="Cheuk R.F."/>
            <person name="Karlin-Newmann G."/>
            <person name="Liu S.X."/>
            <person name="Lam B."/>
            <person name="Sakano H."/>
            <person name="Wu T."/>
            <person name="Yu G."/>
            <person name="Miranda M."/>
            <person name="Quach H.L."/>
            <person name="Tripp M."/>
            <person name="Chang C.H."/>
            <person name="Lee J.M."/>
            <person name="Toriumi M.J."/>
            <person name="Chan M.M."/>
            <person name="Tang C.C."/>
            <person name="Onodera C.S."/>
            <person name="Deng J.M."/>
            <person name="Akiyama K."/>
            <person name="Ansari Y."/>
            <person name="Arakawa T."/>
            <person name="Banh J."/>
            <person name="Banno F."/>
            <person name="Bowser L."/>
            <person name="Brooks S.Y."/>
            <person name="Carninci P."/>
            <person name="Chao Q."/>
            <person name="Choy N."/>
            <person name="Enju A."/>
            <person name="Goldsmith A.D."/>
            <person name="Gurjal M."/>
            <person name="Hansen N.F."/>
            <person name="Hayashizaki Y."/>
            <person name="Johnson-Hopson C."/>
            <person name="Hsuan V.W."/>
            <person name="Iida K."/>
            <person name="Karnes M."/>
            <person name="Khan S."/>
            <person name="Koesema E."/>
            <person name="Ishida J."/>
            <person name="Jiang P.X."/>
            <person name="Jones T."/>
            <person name="Kawai J."/>
            <person name="Kamiya A."/>
            <person name="Meyers C."/>
            <person name="Nakajima M."/>
            <person name="Narusaka M."/>
            <person name="Seki M."/>
            <person name="Sakurai T."/>
            <person name="Satou M."/>
            <person name="Tamse R."/>
            <person name="Vaysberg M."/>
            <person name="Wallender E.K."/>
            <person name="Wong C."/>
            <person name="Yamamura Y."/>
            <person name="Yuan S."/>
            <person name="Shinozaki K."/>
            <person name="Davis R.W."/>
            <person name="Theologis A."/>
            <person name="Ecker J.R."/>
        </authorList>
    </citation>
    <scope>NUCLEOTIDE SEQUENCE [LARGE SCALE MRNA] OF 15-461 (ISOFORM 1)</scope>
    <source>
        <strain>cv. Columbia</strain>
    </source>
</reference>
<reference key="4">
    <citation type="journal article" date="2004" name="Phytochemistry">
        <title>The S8 serine, C1A cysteine and A1 aspartic protease families in Arabidopsis.</title>
        <authorList>
            <person name="Beers E.P."/>
            <person name="Jones A.M."/>
            <person name="Dickerman A.W."/>
        </authorList>
    </citation>
    <scope>GENE FAMILY</scope>
</reference>
<reference key="5">
    <citation type="journal article" date="2012" name="Plant Physiol.">
        <title>Misexpression of a chloroplast aspartyl protease leads to severe growth defects and alters carbohydrate metabolism in Arabidopsis.</title>
        <authorList>
            <person name="Paparelli E."/>
            <person name="Gonzali S."/>
            <person name="Parlanti S."/>
            <person name="Novi G."/>
            <person name="Giorgi F.M."/>
            <person name="Licausi F."/>
            <person name="Kosmacz M."/>
            <person name="Feil R."/>
            <person name="Lunn J.E."/>
            <person name="Brust H."/>
            <person name="van Dongen J.T."/>
            <person name="Steup M."/>
            <person name="Perata P."/>
        </authorList>
    </citation>
    <scope>FUNCTION</scope>
    <scope>CATALYTIC ACTIVITY</scope>
    <scope>INDUCTION BY SUCROSE</scope>
    <scope>SUBCELLULAR LOCATION</scope>
    <scope>BIOPHYSICOCHEMICAL PROPERTIES</scope>
    <scope>ACTIVITY REGULATION</scope>
</reference>
<protein>
    <recommendedName>
        <fullName evidence="5">Aspartic proteinase NANA, chloroplast</fullName>
        <ecNumber evidence="4">3.4.23.-</ecNumber>
    </recommendedName>
</protein>
<accession>Q9LTW4</accession>
<accession>F4J9V9</accession>
<accession>Q8VYM5</accession>
<comment type="function">
    <text evidence="4">Aspartic proteinase that can use azocasein as substrate and regulates endogenous sugar levels (e.g. sucrose, glucose and fructose) by modulating starch accumulation and remobilization (PubMed:22987884). Influences general morphology and development (PubMed:22987884).</text>
</comment>
<comment type="activity regulation">
    <text evidence="4">Repressed by pepstatin A.</text>
</comment>
<comment type="biophysicochemical properties">
    <phDependence>
        <text evidence="4">Optimum pH is 6.</text>
    </phDependence>
</comment>
<comment type="subcellular location">
    <subcellularLocation>
        <location evidence="4">Plastid</location>
        <location evidence="4">Chloroplast</location>
    </subcellularLocation>
</comment>
<comment type="alternative products">
    <event type="alternative splicing"/>
    <isoform>
        <id>Q9LTW4-1</id>
        <name>1</name>
        <sequence type="displayed"/>
    </isoform>
    <isoform>
        <id>Q9LTW4-2</id>
        <name>2</name>
        <sequence type="described" ref="VSP_059153 VSP_059154"/>
    </isoform>
</comment>
<comment type="induction">
    <text evidence="4">Expressed with a pronounced diurnal rhythm characterized by a peak at the end of the day and early night (at protein level). Slightly induced by sucrose (Suc).</text>
</comment>
<comment type="similarity">
    <text evidence="6">Belongs to the peptidase A1 family.</text>
</comment>
<comment type="sequence caution" evidence="6">
    <conflict type="erroneous initiation">
        <sequence resource="EMBL-CDS" id="AAL49921"/>
    </conflict>
    <text>Truncated N-terminus.</text>
</comment>
<name>NANA_ARATH</name>
<evidence type="ECO:0000255" key="1"/>
<evidence type="ECO:0000255" key="2">
    <source>
        <dbReference type="PROSITE-ProRule" id="PRU00498"/>
    </source>
</evidence>
<evidence type="ECO:0000255" key="3">
    <source>
        <dbReference type="PROSITE-ProRule" id="PRU01103"/>
    </source>
</evidence>
<evidence type="ECO:0000269" key="4">
    <source>
    </source>
</evidence>
<evidence type="ECO:0000303" key="5">
    <source>
    </source>
</evidence>
<evidence type="ECO:0000305" key="6"/>
<evidence type="ECO:0000312" key="7">
    <source>
        <dbReference type="Araport" id="AT3G12700"/>
    </source>
</evidence>
<evidence type="ECO:0000312" key="8">
    <source>
        <dbReference type="EMBL" id="BAB02414.1"/>
    </source>
</evidence>
<organism>
    <name type="scientific">Arabidopsis thaliana</name>
    <name type="common">Mouse-ear cress</name>
    <dbReference type="NCBI Taxonomy" id="3702"/>
    <lineage>
        <taxon>Eukaryota</taxon>
        <taxon>Viridiplantae</taxon>
        <taxon>Streptophyta</taxon>
        <taxon>Embryophyta</taxon>
        <taxon>Tracheophyta</taxon>
        <taxon>Spermatophyta</taxon>
        <taxon>Magnoliopsida</taxon>
        <taxon>eudicotyledons</taxon>
        <taxon>Gunneridae</taxon>
        <taxon>Pentapetalae</taxon>
        <taxon>rosids</taxon>
        <taxon>malvids</taxon>
        <taxon>Brassicales</taxon>
        <taxon>Brassicaceae</taxon>
        <taxon>Camelineae</taxon>
        <taxon>Arabidopsis</taxon>
    </lineage>
</organism>
<dbReference type="EC" id="3.4.23.-" evidence="4"/>
<dbReference type="EMBL" id="AB024033">
    <property type="protein sequence ID" value="BAB02414.1"/>
    <property type="molecule type" value="Genomic_DNA"/>
</dbReference>
<dbReference type="EMBL" id="CP002686">
    <property type="protein sequence ID" value="AEE75236.1"/>
    <property type="molecule type" value="Genomic_DNA"/>
</dbReference>
<dbReference type="EMBL" id="CP002686">
    <property type="protein sequence ID" value="AEE75237.1"/>
    <property type="molecule type" value="Genomic_DNA"/>
</dbReference>
<dbReference type="EMBL" id="AY070426">
    <property type="protein sequence ID" value="AAL49921.1"/>
    <property type="status" value="ALT_INIT"/>
    <property type="molecule type" value="mRNA"/>
</dbReference>
<dbReference type="RefSeq" id="NP_001154610.1">
    <molecule id="Q9LTW4-2"/>
    <property type="nucleotide sequence ID" value="NM_001161138.1"/>
</dbReference>
<dbReference type="RefSeq" id="NP_187876.2">
    <molecule id="Q9LTW4-1"/>
    <property type="nucleotide sequence ID" value="NM_112106.4"/>
</dbReference>
<dbReference type="SMR" id="Q9LTW4"/>
<dbReference type="FunCoup" id="Q9LTW4">
    <property type="interactions" value="17"/>
</dbReference>
<dbReference type="STRING" id="3702.Q9LTW4"/>
<dbReference type="MEROPS" id="A01.A30"/>
<dbReference type="GlyCosmos" id="Q9LTW4">
    <property type="glycosylation" value="3 sites, No reported glycans"/>
</dbReference>
<dbReference type="GlyGen" id="Q9LTW4">
    <property type="glycosylation" value="4 sites"/>
</dbReference>
<dbReference type="PaxDb" id="3702-AT3G12700.1"/>
<dbReference type="ProteomicsDB" id="251200">
    <molecule id="Q9LTW4-1"/>
</dbReference>
<dbReference type="EnsemblPlants" id="AT3G12700.1">
    <molecule id="Q9LTW4-1"/>
    <property type="protein sequence ID" value="AT3G12700.1"/>
    <property type="gene ID" value="AT3G12700"/>
</dbReference>
<dbReference type="EnsemblPlants" id="AT3G12700.2">
    <molecule id="Q9LTW4-2"/>
    <property type="protein sequence ID" value="AT3G12700.2"/>
    <property type="gene ID" value="AT3G12700"/>
</dbReference>
<dbReference type="GeneID" id="820452"/>
<dbReference type="Gramene" id="AT3G12700.1">
    <molecule id="Q9LTW4-1"/>
    <property type="protein sequence ID" value="AT3G12700.1"/>
    <property type="gene ID" value="AT3G12700"/>
</dbReference>
<dbReference type="Gramene" id="AT3G12700.2">
    <molecule id="Q9LTW4-2"/>
    <property type="protein sequence ID" value="AT3G12700.2"/>
    <property type="gene ID" value="AT3G12700"/>
</dbReference>
<dbReference type="KEGG" id="ath:AT3G12700"/>
<dbReference type="Araport" id="AT3G12700"/>
<dbReference type="TAIR" id="AT3G12700">
    <property type="gene designation" value="NANA"/>
</dbReference>
<dbReference type="eggNOG" id="KOG1339">
    <property type="taxonomic scope" value="Eukaryota"/>
</dbReference>
<dbReference type="HOGENOM" id="CLU_005738_8_0_1"/>
<dbReference type="InParanoid" id="Q9LTW4"/>
<dbReference type="OMA" id="GSEFTWF"/>
<dbReference type="PhylomeDB" id="Q9LTW4"/>
<dbReference type="PRO" id="PR:Q9LTW4"/>
<dbReference type="Proteomes" id="UP000006548">
    <property type="component" value="Chromosome 3"/>
</dbReference>
<dbReference type="ExpressionAtlas" id="Q9LTW4">
    <property type="expression patterns" value="baseline and differential"/>
</dbReference>
<dbReference type="GO" id="GO:0009507">
    <property type="term" value="C:chloroplast"/>
    <property type="evidence" value="ECO:0000314"/>
    <property type="project" value="TAIR"/>
</dbReference>
<dbReference type="GO" id="GO:0004190">
    <property type="term" value="F:aspartic-type endopeptidase activity"/>
    <property type="evidence" value="ECO:0000314"/>
    <property type="project" value="TAIR"/>
</dbReference>
<dbReference type="GO" id="GO:0005975">
    <property type="term" value="P:carbohydrate metabolic process"/>
    <property type="evidence" value="ECO:0000315"/>
    <property type="project" value="TAIR"/>
</dbReference>
<dbReference type="GO" id="GO:0010019">
    <property type="term" value="P:chloroplast-nucleus signaling pathway"/>
    <property type="evidence" value="ECO:0000315"/>
    <property type="project" value="TAIR"/>
</dbReference>
<dbReference type="GO" id="GO:0007623">
    <property type="term" value="P:circadian rhythm"/>
    <property type="evidence" value="ECO:0000270"/>
    <property type="project" value="UniProtKB"/>
</dbReference>
<dbReference type="GO" id="GO:0006508">
    <property type="term" value="P:proteolysis"/>
    <property type="evidence" value="ECO:0007669"/>
    <property type="project" value="UniProtKB-KW"/>
</dbReference>
<dbReference type="GO" id="GO:0009744">
    <property type="term" value="P:response to sucrose"/>
    <property type="evidence" value="ECO:0000270"/>
    <property type="project" value="UniProtKB"/>
</dbReference>
<dbReference type="CDD" id="cd05476">
    <property type="entry name" value="pepsin_A_like_plant"/>
    <property type="match status" value="1"/>
</dbReference>
<dbReference type="FunFam" id="2.40.70.10:FF:000033">
    <property type="entry name" value="Aspartyl protease family protein"/>
    <property type="match status" value="1"/>
</dbReference>
<dbReference type="Gene3D" id="2.40.70.10">
    <property type="entry name" value="Acid Proteases"/>
    <property type="match status" value="2"/>
</dbReference>
<dbReference type="InterPro" id="IPR001461">
    <property type="entry name" value="Aspartic_peptidase_A1"/>
</dbReference>
<dbReference type="InterPro" id="IPR001969">
    <property type="entry name" value="Aspartic_peptidase_AS"/>
</dbReference>
<dbReference type="InterPro" id="IPR034161">
    <property type="entry name" value="Pepsin-like_plant"/>
</dbReference>
<dbReference type="InterPro" id="IPR033121">
    <property type="entry name" value="PEPTIDASE_A1"/>
</dbReference>
<dbReference type="InterPro" id="IPR021109">
    <property type="entry name" value="Peptidase_aspartic_dom_sf"/>
</dbReference>
<dbReference type="InterPro" id="IPR051708">
    <property type="entry name" value="Plant_Aspart_Prot_A1"/>
</dbReference>
<dbReference type="InterPro" id="IPR032799">
    <property type="entry name" value="TAXi_C"/>
</dbReference>
<dbReference type="InterPro" id="IPR032861">
    <property type="entry name" value="TAXi_N"/>
</dbReference>
<dbReference type="PANTHER" id="PTHR47967:SF69">
    <property type="entry name" value="ASPARTIC PROTEINASE NANA, CHLOROPLAST"/>
    <property type="match status" value="1"/>
</dbReference>
<dbReference type="PANTHER" id="PTHR47967">
    <property type="entry name" value="OS07G0603500 PROTEIN-RELATED"/>
    <property type="match status" value="1"/>
</dbReference>
<dbReference type="Pfam" id="PF14541">
    <property type="entry name" value="TAXi_C"/>
    <property type="match status" value="1"/>
</dbReference>
<dbReference type="Pfam" id="PF14543">
    <property type="entry name" value="TAXi_N"/>
    <property type="match status" value="1"/>
</dbReference>
<dbReference type="PRINTS" id="PR00792">
    <property type="entry name" value="PEPSIN"/>
</dbReference>
<dbReference type="SUPFAM" id="SSF50630">
    <property type="entry name" value="Acid proteases"/>
    <property type="match status" value="1"/>
</dbReference>
<dbReference type="PROSITE" id="PS00141">
    <property type="entry name" value="ASP_PROTEASE"/>
    <property type="match status" value="1"/>
</dbReference>
<dbReference type="PROSITE" id="PS51767">
    <property type="entry name" value="PEPTIDASE_A1"/>
    <property type="match status" value="1"/>
</dbReference>
<keyword id="KW-0025">Alternative splicing</keyword>
<keyword id="KW-0064">Aspartyl protease</keyword>
<keyword id="KW-0150">Chloroplast</keyword>
<keyword id="KW-0325">Glycoprotein</keyword>
<keyword id="KW-0378">Hydrolase</keyword>
<keyword id="KW-0934">Plastid</keyword>
<keyword id="KW-0645">Protease</keyword>
<keyword id="KW-1185">Reference proteome</keyword>
<keyword id="KW-0809">Transit peptide</keyword>
<feature type="transit peptide" description="Chloroplast" evidence="6">
    <location>
        <begin position="1"/>
        <end status="unknown"/>
    </location>
</feature>
<feature type="chain" id="PRO_0000441984" description="Aspartic proteinase NANA, chloroplast" evidence="1">
    <location>
        <begin status="unknown"/>
        <end position="461"/>
    </location>
</feature>
<feature type="domain" description="Peptidase A1" evidence="3">
    <location>
        <begin position="106"/>
        <end position="456"/>
    </location>
</feature>
<feature type="active site" evidence="3">
    <location>
        <position position="124"/>
    </location>
</feature>
<feature type="active site" evidence="3">
    <location>
        <position position="338"/>
    </location>
</feature>
<feature type="glycosylation site" description="N-linked (GlcNAc...) asparagine" evidence="2">
    <location>
        <position position="86"/>
    </location>
</feature>
<feature type="glycosylation site" description="N-linked (GlcNAc...) asparagine" evidence="2">
    <location>
        <position position="274"/>
    </location>
</feature>
<feature type="glycosylation site" description="N-linked (GlcNAc...) asparagine" evidence="2">
    <location>
        <position position="386"/>
    </location>
</feature>
<feature type="splice variant" id="VSP_059153" description="In isoform 2.">
    <original>YADGSAAQGVFAKETITVGLTNGRMARLPGHLIGCSSSFTGQSFQGADGVLGLAFSDFSFTSTATSLYGAKFS</original>
    <variation>EFFGVAWIRCKCIAREGEIKYMQMGQQHKAYSQRRLSQLVSLMVVWLDSLVTSLVVVVPLQDRASKEPMGFLV</variation>
    <location>
        <begin position="191"/>
        <end position="263"/>
    </location>
</feature>
<feature type="splice variant" id="VSP_059154" description="In isoform 2.">
    <location>
        <begin position="264"/>
        <end position="461"/>
    </location>
</feature>
<proteinExistence type="evidence at protein level"/>
<gene>
    <name evidence="5" type="primary">NANA</name>
    <name evidence="7" type="ordered locus">At3g12700</name>
    <name evidence="8" type="ORF">MBK21.8</name>
</gene>
<sequence length="461" mass="50568">MYINTLFWKQNPTGDKKNQEEKMQKTLLSCLITTLLLITVADSMKDTSVRLKLAHRDTLLPKPLSRIEDVIGADQKRHSLISRKRNSTVGVKMDLGSGIDYGTAQYFTEIRVGTPAKKFRVVVDTGSELTWVNCRYRARGKDNRRVFRADESKSFKTVGCLTQTCKVDLMNLFSLTTCPTPSTPCSYDYRYADGSAAQGVFAKETITVGLTNGRMARLPGHLIGCSSSFTGQSFQGADGVLGLAFSDFSFTSTATSLYGAKFSYCLVDHLSNKNVSNYLIFGSSRSTKTAFRRTTPLDLTRIPPFYAINVIGISLGYDMLDIPSQVWDATSGGGTILDSGTSLTLLADAAYKQVVTGLARYLVELKRVKPEGVPIEYCFSFTSGFNVSKLPQLTFHLKGGARFEPHRKSYLVDAAPGVKCLGFVSAGTPATNVIGNIMQQNYLWEFDLMASTLSFAPSACT</sequence>